<gene>
    <name evidence="1" type="primary">argD</name>
    <name type="ordered locus">TM_1785</name>
</gene>
<name>ARGD_THEMA</name>
<organism>
    <name type="scientific">Thermotoga maritima (strain ATCC 43589 / DSM 3109 / JCM 10099 / NBRC 100826 / MSB8)</name>
    <dbReference type="NCBI Taxonomy" id="243274"/>
    <lineage>
        <taxon>Bacteria</taxon>
        <taxon>Thermotogati</taxon>
        <taxon>Thermotogota</taxon>
        <taxon>Thermotogae</taxon>
        <taxon>Thermotogales</taxon>
        <taxon>Thermotogaceae</taxon>
        <taxon>Thermotoga</taxon>
    </lineage>
</organism>
<sequence length="385" mass="42884">MYLMNTYSRFPATFVYGKGSWIYDEKGNAYLDFTSGIAVNVLGHSHPRLVEAIKDQAEKLIHCSNLFWNRPQMELAELLSKNTFGGKVFFANTGTEANEAAIKIARKYGKKKSEKKYRILSAHNSFHGRTLGSLTATGQPKYQKPFEPLVPGFEYFEFNNVEDLRRKMSEDVCAVFLEPIQGESGIVPATKEFLEEARKLCDEYDALLVFDEVQCGMGRTGKLFAYQKYGVVPDVLTTAKGLGGGVPIGAVIVNERANVLEPGDHGTTFGGNPLACRAGVTVIKELTKEGFLEEVEEKGNYLMKKLQEMKEEYDVVADVRGMGLMIGIQFREEVSNREVATKCFENKLLVVPAGNNTIRFLPPLTVEYGEIDLAVETLKKVLQGI</sequence>
<reference key="1">
    <citation type="journal article" date="1999" name="Nature">
        <title>Evidence for lateral gene transfer between Archaea and Bacteria from genome sequence of Thermotoga maritima.</title>
        <authorList>
            <person name="Nelson K.E."/>
            <person name="Clayton R.A."/>
            <person name="Gill S.R."/>
            <person name="Gwinn M.L."/>
            <person name="Dodson R.J."/>
            <person name="Haft D.H."/>
            <person name="Hickey E.K."/>
            <person name="Peterson J.D."/>
            <person name="Nelson W.C."/>
            <person name="Ketchum K.A."/>
            <person name="McDonald L.A."/>
            <person name="Utterback T.R."/>
            <person name="Malek J.A."/>
            <person name="Linher K.D."/>
            <person name="Garrett M.M."/>
            <person name="Stewart A.M."/>
            <person name="Cotton M.D."/>
            <person name="Pratt M.S."/>
            <person name="Phillips C.A."/>
            <person name="Richardson D.L."/>
            <person name="Heidelberg J.F."/>
            <person name="Sutton G.G."/>
            <person name="Fleischmann R.D."/>
            <person name="Eisen J.A."/>
            <person name="White O."/>
            <person name="Salzberg S.L."/>
            <person name="Smith H.O."/>
            <person name="Venter J.C."/>
            <person name="Fraser C.M."/>
        </authorList>
    </citation>
    <scope>NUCLEOTIDE SEQUENCE [LARGE SCALE GENOMIC DNA]</scope>
    <source>
        <strain>ATCC 43589 / DSM 3109 / JCM 10099 / NBRC 100826 / MSB8</strain>
    </source>
</reference>
<reference key="2">
    <citation type="submission" date="2009-02" db="PDB data bank">
        <title>Crystal structure of acetylornithine aminotransferase from Thermotoga maritima.</title>
        <authorList>
            <consortium name="RIKEN structural genomics initiative (RSGI)"/>
        </authorList>
    </citation>
    <scope>X-RAY CRYSTALLOGRAPHY (1.5 ANGSTROMS) IN COMPLEX WITH PLP</scope>
</reference>
<reference key="3">
    <citation type="submission" date="2009-02" db="PDB data bank">
        <title>Crystal structure of acetylornithine aminotransferase (EC 2.6.1.11) (acoat) (tm1785) from Thermotoga maritima at 1.40 a resolution.</title>
        <authorList>
            <consortium name="Joint center for structural genomics (JCSG)"/>
        </authorList>
    </citation>
    <scope>X-RAY CRYSTALLOGRAPHY (1.4 ANGSTROMS) IN COMPLEX WITH PLP</scope>
</reference>
<keyword id="KW-0002">3D-structure</keyword>
<keyword id="KW-0028">Amino-acid biosynthesis</keyword>
<keyword id="KW-0032">Aminotransferase</keyword>
<keyword id="KW-0055">Arginine biosynthesis</keyword>
<keyword id="KW-0963">Cytoplasm</keyword>
<keyword id="KW-0663">Pyridoxal phosphate</keyword>
<keyword id="KW-1185">Reference proteome</keyword>
<keyword id="KW-0808">Transferase</keyword>
<feature type="chain" id="PRO_0000112805" description="Acetylornithine aminotransferase">
    <location>
        <begin position="1"/>
        <end position="385"/>
    </location>
</feature>
<feature type="binding site" evidence="1 2 3">
    <location>
        <begin position="94"/>
        <end position="95"/>
    </location>
    <ligand>
        <name>pyridoxal 5'-phosphate</name>
        <dbReference type="ChEBI" id="CHEBI:597326"/>
    </ligand>
</feature>
<feature type="binding site" evidence="1 4 5">
    <location>
        <position position="126"/>
    </location>
    <ligand>
        <name>pyridoxal 5'-phosphate</name>
        <dbReference type="ChEBI" id="CHEBI:597326"/>
    </ligand>
</feature>
<feature type="binding site" evidence="1">
    <location>
        <position position="129"/>
    </location>
    <ligand>
        <name>N(2)-acetyl-L-ornithine</name>
        <dbReference type="ChEBI" id="CHEBI:57805"/>
    </ligand>
</feature>
<feature type="binding site" evidence="1 4 5">
    <location>
        <begin position="211"/>
        <end position="214"/>
    </location>
    <ligand>
        <name>pyridoxal 5'-phosphate</name>
        <dbReference type="ChEBI" id="CHEBI:597326"/>
    </ligand>
</feature>
<feature type="binding site" evidence="1">
    <location>
        <position position="267"/>
    </location>
    <ligand>
        <name>N(2)-acetyl-L-ornithine</name>
        <dbReference type="ChEBI" id="CHEBI:57805"/>
    </ligand>
</feature>
<feature type="binding site" evidence="1 3">
    <location>
        <position position="268"/>
    </location>
    <ligand>
        <name>pyridoxal 5'-phosphate</name>
        <dbReference type="ChEBI" id="CHEBI:597326"/>
    </ligand>
</feature>
<feature type="modified residue" description="N6-(pyridoxal phosphate)lysine" evidence="1">
    <location>
        <position position="240"/>
    </location>
</feature>
<feature type="strand" evidence="7">
    <location>
        <begin position="13"/>
        <end position="19"/>
    </location>
</feature>
<feature type="strand" evidence="7">
    <location>
        <begin position="21"/>
        <end position="24"/>
    </location>
</feature>
<feature type="strand" evidence="7">
    <location>
        <begin position="29"/>
        <end position="34"/>
    </location>
</feature>
<feature type="helix" evidence="7">
    <location>
        <begin position="35"/>
        <end position="38"/>
    </location>
</feature>
<feature type="helix" evidence="7">
    <location>
        <begin position="47"/>
        <end position="59"/>
    </location>
</feature>
<feature type="strand" evidence="7">
    <location>
        <begin position="67"/>
        <end position="69"/>
    </location>
</feature>
<feature type="helix" evidence="7">
    <location>
        <begin position="70"/>
        <end position="81"/>
    </location>
</feature>
<feature type="turn" evidence="7">
    <location>
        <begin position="82"/>
        <end position="84"/>
    </location>
</feature>
<feature type="strand" evidence="7">
    <location>
        <begin position="87"/>
        <end position="93"/>
    </location>
</feature>
<feature type="helix" evidence="7">
    <location>
        <begin position="94"/>
        <end position="112"/>
    </location>
</feature>
<feature type="strand" evidence="7">
    <location>
        <begin position="118"/>
        <end position="123"/>
    </location>
</feature>
<feature type="helix" evidence="7">
    <location>
        <begin position="131"/>
        <end position="136"/>
    </location>
</feature>
<feature type="helix" evidence="7">
    <location>
        <begin position="140"/>
        <end position="143"/>
    </location>
</feature>
<feature type="helix" evidence="7">
    <location>
        <begin position="144"/>
        <end position="146"/>
    </location>
</feature>
<feature type="strand" evidence="7">
    <location>
        <begin position="153"/>
        <end position="156"/>
    </location>
</feature>
<feature type="helix" evidence="7">
    <location>
        <begin position="161"/>
        <end position="167"/>
    </location>
</feature>
<feature type="strand" evidence="7">
    <location>
        <begin position="172"/>
        <end position="177"/>
    </location>
</feature>
<feature type="strand" evidence="7">
    <location>
        <begin position="179"/>
        <end position="181"/>
    </location>
</feature>
<feature type="turn" evidence="7">
    <location>
        <begin position="183"/>
        <end position="185"/>
    </location>
</feature>
<feature type="helix" evidence="7">
    <location>
        <begin position="191"/>
        <end position="204"/>
    </location>
</feature>
<feature type="strand" evidence="7">
    <location>
        <begin position="207"/>
        <end position="211"/>
    </location>
</feature>
<feature type="turn" evidence="7">
    <location>
        <begin position="213"/>
        <end position="220"/>
    </location>
</feature>
<feature type="strand" evidence="7">
    <location>
        <begin position="221"/>
        <end position="224"/>
    </location>
</feature>
<feature type="helix" evidence="7">
    <location>
        <begin position="225"/>
        <end position="229"/>
    </location>
</feature>
<feature type="strand" evidence="7">
    <location>
        <begin position="234"/>
        <end position="238"/>
    </location>
</feature>
<feature type="helix" evidence="7">
    <location>
        <begin position="240"/>
        <end position="243"/>
    </location>
</feature>
<feature type="strand" evidence="7">
    <location>
        <begin position="249"/>
        <end position="253"/>
    </location>
</feature>
<feature type="turn" evidence="6">
    <location>
        <begin position="255"/>
        <end position="257"/>
    </location>
</feature>
<feature type="helix" evidence="7">
    <location>
        <begin position="273"/>
        <end position="286"/>
    </location>
</feature>
<feature type="helix" evidence="7">
    <location>
        <begin position="291"/>
        <end position="312"/>
    </location>
</feature>
<feature type="strand" evidence="7">
    <location>
        <begin position="316"/>
        <end position="322"/>
    </location>
</feature>
<feature type="strand" evidence="7">
    <location>
        <begin position="325"/>
        <end position="330"/>
    </location>
</feature>
<feature type="helix" evidence="7">
    <location>
        <begin position="336"/>
        <end position="345"/>
    </location>
</feature>
<feature type="strand" evidence="7">
    <location>
        <begin position="351"/>
        <end position="353"/>
    </location>
</feature>
<feature type="turn" evidence="7">
    <location>
        <begin position="354"/>
        <end position="356"/>
    </location>
</feature>
<feature type="strand" evidence="7">
    <location>
        <begin position="357"/>
        <end position="360"/>
    </location>
</feature>
<feature type="helix" evidence="7">
    <location>
        <begin position="368"/>
        <end position="383"/>
    </location>
</feature>
<accession>Q9X2A5</accession>
<protein>
    <recommendedName>
        <fullName evidence="1">Acetylornithine aminotransferase</fullName>
        <shortName evidence="1">ACOAT</shortName>
        <ecNumber evidence="1">2.6.1.11</ecNumber>
    </recommendedName>
</protein>
<dbReference type="EC" id="2.6.1.11" evidence="1"/>
<dbReference type="EMBL" id="AE000512">
    <property type="protein sequence ID" value="AAD36848.1"/>
    <property type="molecule type" value="Genomic_DNA"/>
</dbReference>
<dbReference type="PIR" id="D72211">
    <property type="entry name" value="D72211"/>
</dbReference>
<dbReference type="RefSeq" id="NP_229582.1">
    <property type="nucleotide sequence ID" value="NC_000853.1"/>
</dbReference>
<dbReference type="RefSeq" id="WP_004082331.1">
    <property type="nucleotide sequence ID" value="NZ_CP011107.1"/>
</dbReference>
<dbReference type="PDB" id="2E54">
    <property type="method" value="X-ray"/>
    <property type="resolution" value="1.50 A"/>
    <property type="chains" value="A=1-385"/>
</dbReference>
<dbReference type="PDB" id="2ORD">
    <property type="method" value="X-ray"/>
    <property type="resolution" value="1.40 A"/>
    <property type="chains" value="A/B=1-385"/>
</dbReference>
<dbReference type="PDBsum" id="2E54"/>
<dbReference type="PDBsum" id="2ORD"/>
<dbReference type="SMR" id="Q9X2A5"/>
<dbReference type="FunCoup" id="Q9X2A5">
    <property type="interactions" value="375"/>
</dbReference>
<dbReference type="STRING" id="243274.TM_1785"/>
<dbReference type="PaxDb" id="243274-THEMA_05275"/>
<dbReference type="EnsemblBacteria" id="AAD36848">
    <property type="protein sequence ID" value="AAD36848"/>
    <property type="gene ID" value="TM_1785"/>
</dbReference>
<dbReference type="KEGG" id="tma:TM1785"/>
<dbReference type="KEGG" id="tmi:THEMA_05275"/>
<dbReference type="KEGG" id="tmm:Tmari_1794"/>
<dbReference type="KEGG" id="tmw:THMA_1829"/>
<dbReference type="eggNOG" id="COG4992">
    <property type="taxonomic scope" value="Bacteria"/>
</dbReference>
<dbReference type="InParanoid" id="Q9X2A5"/>
<dbReference type="OrthoDB" id="9801052at2"/>
<dbReference type="UniPathway" id="UPA00068">
    <property type="reaction ID" value="UER00109"/>
</dbReference>
<dbReference type="EvolutionaryTrace" id="Q9X2A5"/>
<dbReference type="Proteomes" id="UP000008183">
    <property type="component" value="Chromosome"/>
</dbReference>
<dbReference type="GO" id="GO:0005737">
    <property type="term" value="C:cytoplasm"/>
    <property type="evidence" value="ECO:0007669"/>
    <property type="project" value="UniProtKB-SubCell"/>
</dbReference>
<dbReference type="GO" id="GO:0042802">
    <property type="term" value="F:identical protein binding"/>
    <property type="evidence" value="ECO:0000318"/>
    <property type="project" value="GO_Central"/>
</dbReference>
<dbReference type="GO" id="GO:0003992">
    <property type="term" value="F:N2-acetyl-L-ornithine:2-oxoglutarate 5-aminotransferase activity"/>
    <property type="evidence" value="ECO:0007669"/>
    <property type="project" value="UniProtKB-UniRule"/>
</dbReference>
<dbReference type="GO" id="GO:0030170">
    <property type="term" value="F:pyridoxal phosphate binding"/>
    <property type="evidence" value="ECO:0000318"/>
    <property type="project" value="GO_Central"/>
</dbReference>
<dbReference type="GO" id="GO:0006526">
    <property type="term" value="P:L-arginine biosynthetic process"/>
    <property type="evidence" value="ECO:0007669"/>
    <property type="project" value="UniProtKB-UniRule"/>
</dbReference>
<dbReference type="CDD" id="cd00610">
    <property type="entry name" value="OAT_like"/>
    <property type="match status" value="1"/>
</dbReference>
<dbReference type="FunFam" id="3.40.640.10:FF:000004">
    <property type="entry name" value="Acetylornithine aminotransferase"/>
    <property type="match status" value="1"/>
</dbReference>
<dbReference type="Gene3D" id="3.90.1150.10">
    <property type="entry name" value="Aspartate Aminotransferase, domain 1"/>
    <property type="match status" value="1"/>
</dbReference>
<dbReference type="Gene3D" id="3.40.640.10">
    <property type="entry name" value="Type I PLP-dependent aspartate aminotransferase-like (Major domain)"/>
    <property type="match status" value="1"/>
</dbReference>
<dbReference type="HAMAP" id="MF_01107">
    <property type="entry name" value="ArgD_aminotrans_3"/>
    <property type="match status" value="1"/>
</dbReference>
<dbReference type="InterPro" id="IPR004636">
    <property type="entry name" value="AcOrn/SuccOrn_fam"/>
</dbReference>
<dbReference type="InterPro" id="IPR005814">
    <property type="entry name" value="Aminotrans_3"/>
</dbReference>
<dbReference type="InterPro" id="IPR049704">
    <property type="entry name" value="Aminotrans_3_PPA_site"/>
</dbReference>
<dbReference type="InterPro" id="IPR050103">
    <property type="entry name" value="Class-III_PLP-dep_AT"/>
</dbReference>
<dbReference type="InterPro" id="IPR015424">
    <property type="entry name" value="PyrdxlP-dep_Trfase"/>
</dbReference>
<dbReference type="InterPro" id="IPR015421">
    <property type="entry name" value="PyrdxlP-dep_Trfase_major"/>
</dbReference>
<dbReference type="InterPro" id="IPR015422">
    <property type="entry name" value="PyrdxlP-dep_Trfase_small"/>
</dbReference>
<dbReference type="NCBIfam" id="TIGR00707">
    <property type="entry name" value="argD"/>
    <property type="match status" value="1"/>
</dbReference>
<dbReference type="NCBIfam" id="NF002325">
    <property type="entry name" value="PRK01278.1"/>
    <property type="match status" value="1"/>
</dbReference>
<dbReference type="NCBIfam" id="NF002874">
    <property type="entry name" value="PRK03244.1"/>
    <property type="match status" value="1"/>
</dbReference>
<dbReference type="PANTHER" id="PTHR11986:SF79">
    <property type="entry name" value="ACETYLORNITHINE AMINOTRANSFERASE, MITOCHONDRIAL"/>
    <property type="match status" value="1"/>
</dbReference>
<dbReference type="PANTHER" id="PTHR11986">
    <property type="entry name" value="AMINOTRANSFERASE CLASS III"/>
    <property type="match status" value="1"/>
</dbReference>
<dbReference type="Pfam" id="PF00202">
    <property type="entry name" value="Aminotran_3"/>
    <property type="match status" value="1"/>
</dbReference>
<dbReference type="PIRSF" id="PIRSF000521">
    <property type="entry name" value="Transaminase_4ab_Lys_Orn"/>
    <property type="match status" value="1"/>
</dbReference>
<dbReference type="SUPFAM" id="SSF53383">
    <property type="entry name" value="PLP-dependent transferases"/>
    <property type="match status" value="1"/>
</dbReference>
<dbReference type="PROSITE" id="PS00600">
    <property type="entry name" value="AA_TRANSFER_CLASS_3"/>
    <property type="match status" value="1"/>
</dbReference>
<comment type="catalytic activity">
    <reaction evidence="1">
        <text>N(2)-acetyl-L-ornithine + 2-oxoglutarate = N-acetyl-L-glutamate 5-semialdehyde + L-glutamate</text>
        <dbReference type="Rhea" id="RHEA:18049"/>
        <dbReference type="ChEBI" id="CHEBI:16810"/>
        <dbReference type="ChEBI" id="CHEBI:29123"/>
        <dbReference type="ChEBI" id="CHEBI:29985"/>
        <dbReference type="ChEBI" id="CHEBI:57805"/>
        <dbReference type="EC" id="2.6.1.11"/>
    </reaction>
</comment>
<comment type="cofactor">
    <cofactor evidence="1">
        <name>pyridoxal 5'-phosphate</name>
        <dbReference type="ChEBI" id="CHEBI:597326"/>
    </cofactor>
    <text evidence="1">Binds 1 pyridoxal phosphate per subunit.</text>
</comment>
<comment type="pathway">
    <text evidence="1">Amino-acid biosynthesis; L-arginine biosynthesis; N(2)-acetyl-L-ornithine from L-glutamate: step 4/4.</text>
</comment>
<comment type="subunit">
    <text evidence="1 4 5">Homodimer.</text>
</comment>
<comment type="subcellular location">
    <subcellularLocation>
        <location evidence="1">Cytoplasm</location>
    </subcellularLocation>
</comment>
<comment type="miscellaneous">
    <text evidence="1">May also have succinyldiaminopimelate aminotransferase activity, thus carrying out the corresponding step in lysine biosynthesis.</text>
</comment>
<comment type="similarity">
    <text evidence="1">Belongs to the class-III pyridoxal-phosphate-dependent aminotransferase family. ArgD subfamily.</text>
</comment>
<evidence type="ECO:0000255" key="1">
    <source>
        <dbReference type="HAMAP-Rule" id="MF_01107"/>
    </source>
</evidence>
<evidence type="ECO:0000269" key="2">
    <source ref="2"/>
</evidence>
<evidence type="ECO:0000269" key="3">
    <source ref="3"/>
</evidence>
<evidence type="ECO:0000305" key="4">
    <source ref="2"/>
</evidence>
<evidence type="ECO:0000305" key="5">
    <source ref="3"/>
</evidence>
<evidence type="ECO:0007829" key="6">
    <source>
        <dbReference type="PDB" id="2E54"/>
    </source>
</evidence>
<evidence type="ECO:0007829" key="7">
    <source>
        <dbReference type="PDB" id="2ORD"/>
    </source>
</evidence>
<proteinExistence type="evidence at protein level"/>